<protein>
    <recommendedName>
        <fullName>Kelch-like protein 40a</fullName>
    </recommendedName>
    <alternativeName>
        <fullName>Kelch repeat and BTB domain-containing protein 5a</fullName>
    </alternativeName>
</protein>
<name>KL40A_DANRE</name>
<dbReference type="EMBL" id="CU464125">
    <property type="status" value="NOT_ANNOTATED_CDS"/>
    <property type="molecule type" value="Genomic_DNA"/>
</dbReference>
<dbReference type="EMBL" id="BC078427">
    <property type="protein sequence ID" value="AAH78427.1"/>
    <property type="molecule type" value="mRNA"/>
</dbReference>
<dbReference type="EMBL" id="BC163267">
    <property type="protein sequence ID" value="AAI63267.1"/>
    <property type="molecule type" value="mRNA"/>
</dbReference>
<dbReference type="RefSeq" id="NP_001122154.1">
    <property type="nucleotide sequence ID" value="NM_001128682.1"/>
</dbReference>
<dbReference type="SMR" id="B3DIV9"/>
<dbReference type="FunCoup" id="B3DIV9">
    <property type="interactions" value="712"/>
</dbReference>
<dbReference type="STRING" id="7955.ENSDARP00000057021"/>
<dbReference type="PaxDb" id="7955-ENSDARP00000057021"/>
<dbReference type="Ensembl" id="ENSDART00000057022">
    <property type="protein sequence ID" value="ENSDARP00000057021"/>
    <property type="gene ID" value="ENSDARG00000039052"/>
</dbReference>
<dbReference type="GeneID" id="553257"/>
<dbReference type="KEGG" id="dre:553257"/>
<dbReference type="AGR" id="ZFIN:ZDB-GENE-050916-1"/>
<dbReference type="CTD" id="553257"/>
<dbReference type="ZFIN" id="ZDB-GENE-050916-1">
    <property type="gene designation" value="klhl40a"/>
</dbReference>
<dbReference type="eggNOG" id="KOG4441">
    <property type="taxonomic scope" value="Eukaryota"/>
</dbReference>
<dbReference type="HOGENOM" id="CLU_004253_14_4_1"/>
<dbReference type="InParanoid" id="B3DIV9"/>
<dbReference type="OMA" id="KMVLGNC"/>
<dbReference type="OrthoDB" id="6359816at2759"/>
<dbReference type="PhylomeDB" id="B3DIV9"/>
<dbReference type="TreeFam" id="TF351653"/>
<dbReference type="PRO" id="PR:B3DIV9"/>
<dbReference type="Proteomes" id="UP000000437">
    <property type="component" value="Chromosome 2"/>
</dbReference>
<dbReference type="Bgee" id="ENSDARG00000039052">
    <property type="expression patterns" value="Expressed in muscle tissue and 11 other cell types or tissues"/>
</dbReference>
<dbReference type="GO" id="GO:0031672">
    <property type="term" value="C:A band"/>
    <property type="evidence" value="ECO:0007669"/>
    <property type="project" value="UniProtKB-SubCell"/>
</dbReference>
<dbReference type="GO" id="GO:0031463">
    <property type="term" value="C:Cul3-RING ubiquitin ligase complex"/>
    <property type="evidence" value="ECO:0000250"/>
    <property type="project" value="UniProtKB"/>
</dbReference>
<dbReference type="GO" id="GO:0005737">
    <property type="term" value="C:cytoplasm"/>
    <property type="evidence" value="ECO:0000250"/>
    <property type="project" value="UniProtKB"/>
</dbReference>
<dbReference type="GO" id="GO:0031674">
    <property type="term" value="C:I band"/>
    <property type="evidence" value="ECO:0007669"/>
    <property type="project" value="UniProtKB-SubCell"/>
</dbReference>
<dbReference type="GO" id="GO:1990756">
    <property type="term" value="F:ubiquitin-like ligase-substrate adaptor activity"/>
    <property type="evidence" value="ECO:0000318"/>
    <property type="project" value="GO_Central"/>
</dbReference>
<dbReference type="GO" id="GO:0061061">
    <property type="term" value="P:muscle structure development"/>
    <property type="evidence" value="ECO:0000315"/>
    <property type="project" value="ZFIN"/>
</dbReference>
<dbReference type="GO" id="GO:0032436">
    <property type="term" value="P:positive regulation of proteasomal ubiquitin-dependent protein catabolic process"/>
    <property type="evidence" value="ECO:0000250"/>
    <property type="project" value="UniProtKB"/>
</dbReference>
<dbReference type="GO" id="GO:0031398">
    <property type="term" value="P:positive regulation of protein ubiquitination"/>
    <property type="evidence" value="ECO:0000250"/>
    <property type="project" value="UniProtKB"/>
</dbReference>
<dbReference type="GO" id="GO:0043161">
    <property type="term" value="P:proteasome-mediated ubiquitin-dependent protein catabolic process"/>
    <property type="evidence" value="ECO:0000318"/>
    <property type="project" value="GO_Central"/>
</dbReference>
<dbReference type="GO" id="GO:0048741">
    <property type="term" value="P:skeletal muscle fiber development"/>
    <property type="evidence" value="ECO:0000315"/>
    <property type="project" value="ZFIN"/>
</dbReference>
<dbReference type="GO" id="GO:0098528">
    <property type="term" value="P:skeletal muscle fiber differentiation"/>
    <property type="evidence" value="ECO:0000250"/>
    <property type="project" value="UniProtKB"/>
</dbReference>
<dbReference type="GO" id="GO:0036268">
    <property type="term" value="P:swimming"/>
    <property type="evidence" value="ECO:0000316"/>
    <property type="project" value="ZFIN"/>
</dbReference>
<dbReference type="CDD" id="cd18516">
    <property type="entry name" value="BACK_KLHL40_KBTBD5"/>
    <property type="match status" value="1"/>
</dbReference>
<dbReference type="CDD" id="cd18340">
    <property type="entry name" value="BTB_POZ_KLHL40_KBTBD5"/>
    <property type="match status" value="1"/>
</dbReference>
<dbReference type="FunFam" id="3.30.710.10:FF:000006">
    <property type="entry name" value="Kelch repeat and BTB domain-containing 6"/>
    <property type="match status" value="1"/>
</dbReference>
<dbReference type="FunFam" id="1.25.40.420:FF:000001">
    <property type="entry name" value="Kelch-like family member 12"/>
    <property type="match status" value="1"/>
</dbReference>
<dbReference type="FunFam" id="2.120.10.80:FF:000037">
    <property type="entry name" value="Kelch-like family member 40"/>
    <property type="match status" value="1"/>
</dbReference>
<dbReference type="Gene3D" id="1.25.40.420">
    <property type="match status" value="1"/>
</dbReference>
<dbReference type="Gene3D" id="2.120.10.80">
    <property type="entry name" value="Kelch-type beta propeller"/>
    <property type="match status" value="1"/>
</dbReference>
<dbReference type="Gene3D" id="3.30.710.10">
    <property type="entry name" value="Potassium Channel Kv1.1, Chain A"/>
    <property type="match status" value="1"/>
</dbReference>
<dbReference type="InterPro" id="IPR011705">
    <property type="entry name" value="BACK"/>
</dbReference>
<dbReference type="InterPro" id="IPR017096">
    <property type="entry name" value="BTB-kelch_protein"/>
</dbReference>
<dbReference type="InterPro" id="IPR000210">
    <property type="entry name" value="BTB/POZ_dom"/>
</dbReference>
<dbReference type="InterPro" id="IPR015915">
    <property type="entry name" value="Kelch-typ_b-propeller"/>
</dbReference>
<dbReference type="InterPro" id="IPR006652">
    <property type="entry name" value="Kelch_1"/>
</dbReference>
<dbReference type="InterPro" id="IPR030607">
    <property type="entry name" value="KLHL40_BTB/POZ_dom"/>
</dbReference>
<dbReference type="InterPro" id="IPR011333">
    <property type="entry name" value="SKP1/BTB/POZ_sf"/>
</dbReference>
<dbReference type="PANTHER" id="PTHR24412">
    <property type="entry name" value="KELCH PROTEIN"/>
    <property type="match status" value="1"/>
</dbReference>
<dbReference type="PANTHER" id="PTHR24412:SF22">
    <property type="entry name" value="KELCH-LIKE PROTEIN 40"/>
    <property type="match status" value="1"/>
</dbReference>
<dbReference type="Pfam" id="PF07707">
    <property type="entry name" value="BACK"/>
    <property type="match status" value="1"/>
</dbReference>
<dbReference type="Pfam" id="PF00651">
    <property type="entry name" value="BTB"/>
    <property type="match status" value="1"/>
</dbReference>
<dbReference type="Pfam" id="PF24681">
    <property type="entry name" value="Kelch_KLHDC2_KLHL20_DRC7"/>
    <property type="match status" value="1"/>
</dbReference>
<dbReference type="PIRSF" id="PIRSF037037">
    <property type="entry name" value="Kelch-like_protein_gigaxonin"/>
    <property type="match status" value="1"/>
</dbReference>
<dbReference type="SMART" id="SM00875">
    <property type="entry name" value="BACK"/>
    <property type="match status" value="1"/>
</dbReference>
<dbReference type="SMART" id="SM00225">
    <property type="entry name" value="BTB"/>
    <property type="match status" value="1"/>
</dbReference>
<dbReference type="SMART" id="SM00612">
    <property type="entry name" value="Kelch"/>
    <property type="match status" value="4"/>
</dbReference>
<dbReference type="SUPFAM" id="SSF117281">
    <property type="entry name" value="Kelch motif"/>
    <property type="match status" value="1"/>
</dbReference>
<dbReference type="SUPFAM" id="SSF54695">
    <property type="entry name" value="POZ domain"/>
    <property type="match status" value="1"/>
</dbReference>
<dbReference type="PROSITE" id="PS50097">
    <property type="entry name" value="BTB"/>
    <property type="match status" value="1"/>
</dbReference>
<proteinExistence type="evidence at transcript level"/>
<evidence type="ECO:0000250" key="1">
    <source>
        <dbReference type="UniProtKB" id="Q9D783"/>
    </source>
</evidence>
<evidence type="ECO:0000255" key="2">
    <source>
        <dbReference type="PROSITE-ProRule" id="PRU00037"/>
    </source>
</evidence>
<evidence type="ECO:0000256" key="3">
    <source>
        <dbReference type="SAM" id="MobiDB-lite"/>
    </source>
</evidence>
<evidence type="ECO:0000269" key="4">
    <source>
    </source>
</evidence>
<evidence type="ECO:0000305" key="5"/>
<gene>
    <name type="primary">klhl40a</name>
    <name type="synonym">kbtbd5a</name>
</gene>
<sequence>MASMSVDPVTEPRMYQQTLLQDGLCDLLDANKFVDCILKIKDKEFPCHRLVLAATSPYFKAMFLSDLEESKKREIVLKDIEPGVMGMILRYIYTSDINLTEQNVQDIFMAANMYQIPSIFSVCVSYLQQKLVLSNCLAIFRLGLLLDCPRLAMEARDFICDRYLLIIRDQDFHQLGPSELAAIITCDSLNVEREESVFESLMDWVEYDTDERTKELPELLHCVRFRLMPTSYFKEKVEGHRLIRTNQELKKELQLIKDAQKGLLHRVKRSSHRKEGKSAEFESDDDDEDGLLPGILNDNPRFGMFQSDLILMINDAGTVAYDVGANECFVASSSTEIPKNHCSLVTKENQIFVVGGLRYNEENKDQPFSSYFLQFDPMSSEWLGMPSLPNPRCLFGLVEAENSIYVVGGKELKEGERALDSVMIYDRQSFKWGESDPLPYAVYGHGIVSHKGLVYVIGGKTESKKCLRRVCVYDPSKFEWKDLAPMKTARSLFGTAVHKNKIYVVTGVTDNGLTSTVEVYDIASNSWSEFVDFPQERSSLNLVELGGFLYAIGGFAMMPNETTEKLEPTEMNDIWKFDEEENCWNGILREIRYAAGATVLGVRLNTLRLTKI</sequence>
<keyword id="KW-0963">Cytoplasm</keyword>
<keyword id="KW-0217">Developmental protein</keyword>
<keyword id="KW-0880">Kelch repeat</keyword>
<keyword id="KW-1185">Reference proteome</keyword>
<keyword id="KW-0677">Repeat</keyword>
<keyword id="KW-0833">Ubl conjugation pathway</keyword>
<accession>B3DIV9</accession>
<accession>B8JL77</accession>
<accession>Q66L56</accession>
<reference key="1">
    <citation type="journal article" date="2013" name="Nature">
        <title>The zebrafish reference genome sequence and its relationship to the human genome.</title>
        <authorList>
            <person name="Howe K."/>
            <person name="Clark M.D."/>
            <person name="Torroja C.F."/>
            <person name="Torrance J."/>
            <person name="Berthelot C."/>
            <person name="Muffato M."/>
            <person name="Collins J.E."/>
            <person name="Humphray S."/>
            <person name="McLaren K."/>
            <person name="Matthews L."/>
            <person name="McLaren S."/>
            <person name="Sealy I."/>
            <person name="Caccamo M."/>
            <person name="Churcher C."/>
            <person name="Scott C."/>
            <person name="Barrett J.C."/>
            <person name="Koch R."/>
            <person name="Rauch G.J."/>
            <person name="White S."/>
            <person name="Chow W."/>
            <person name="Kilian B."/>
            <person name="Quintais L.T."/>
            <person name="Guerra-Assuncao J.A."/>
            <person name="Zhou Y."/>
            <person name="Gu Y."/>
            <person name="Yen J."/>
            <person name="Vogel J.H."/>
            <person name="Eyre T."/>
            <person name="Redmond S."/>
            <person name="Banerjee R."/>
            <person name="Chi J."/>
            <person name="Fu B."/>
            <person name="Langley E."/>
            <person name="Maguire S.F."/>
            <person name="Laird G.K."/>
            <person name="Lloyd D."/>
            <person name="Kenyon E."/>
            <person name="Donaldson S."/>
            <person name="Sehra H."/>
            <person name="Almeida-King J."/>
            <person name="Loveland J."/>
            <person name="Trevanion S."/>
            <person name="Jones M."/>
            <person name="Quail M."/>
            <person name="Willey D."/>
            <person name="Hunt A."/>
            <person name="Burton J."/>
            <person name="Sims S."/>
            <person name="McLay K."/>
            <person name="Plumb B."/>
            <person name="Davis J."/>
            <person name="Clee C."/>
            <person name="Oliver K."/>
            <person name="Clark R."/>
            <person name="Riddle C."/>
            <person name="Elliot D."/>
            <person name="Threadgold G."/>
            <person name="Harden G."/>
            <person name="Ware D."/>
            <person name="Begum S."/>
            <person name="Mortimore B."/>
            <person name="Kerry G."/>
            <person name="Heath P."/>
            <person name="Phillimore B."/>
            <person name="Tracey A."/>
            <person name="Corby N."/>
            <person name="Dunn M."/>
            <person name="Johnson C."/>
            <person name="Wood J."/>
            <person name="Clark S."/>
            <person name="Pelan S."/>
            <person name="Griffiths G."/>
            <person name="Smith M."/>
            <person name="Glithero R."/>
            <person name="Howden P."/>
            <person name="Barker N."/>
            <person name="Lloyd C."/>
            <person name="Stevens C."/>
            <person name="Harley J."/>
            <person name="Holt K."/>
            <person name="Panagiotidis G."/>
            <person name="Lovell J."/>
            <person name="Beasley H."/>
            <person name="Henderson C."/>
            <person name="Gordon D."/>
            <person name="Auger K."/>
            <person name="Wright D."/>
            <person name="Collins J."/>
            <person name="Raisen C."/>
            <person name="Dyer L."/>
            <person name="Leung K."/>
            <person name="Robertson L."/>
            <person name="Ambridge K."/>
            <person name="Leongamornlert D."/>
            <person name="McGuire S."/>
            <person name="Gilderthorp R."/>
            <person name="Griffiths C."/>
            <person name="Manthravadi D."/>
            <person name="Nichol S."/>
            <person name="Barker G."/>
            <person name="Whitehead S."/>
            <person name="Kay M."/>
            <person name="Brown J."/>
            <person name="Murnane C."/>
            <person name="Gray E."/>
            <person name="Humphries M."/>
            <person name="Sycamore N."/>
            <person name="Barker D."/>
            <person name="Saunders D."/>
            <person name="Wallis J."/>
            <person name="Babbage A."/>
            <person name="Hammond S."/>
            <person name="Mashreghi-Mohammadi M."/>
            <person name="Barr L."/>
            <person name="Martin S."/>
            <person name="Wray P."/>
            <person name="Ellington A."/>
            <person name="Matthews N."/>
            <person name="Ellwood M."/>
            <person name="Woodmansey R."/>
            <person name="Clark G."/>
            <person name="Cooper J."/>
            <person name="Tromans A."/>
            <person name="Grafham D."/>
            <person name="Skuce C."/>
            <person name="Pandian R."/>
            <person name="Andrews R."/>
            <person name="Harrison E."/>
            <person name="Kimberley A."/>
            <person name="Garnett J."/>
            <person name="Fosker N."/>
            <person name="Hall R."/>
            <person name="Garner P."/>
            <person name="Kelly D."/>
            <person name="Bird C."/>
            <person name="Palmer S."/>
            <person name="Gehring I."/>
            <person name="Berger A."/>
            <person name="Dooley C.M."/>
            <person name="Ersan-Urun Z."/>
            <person name="Eser C."/>
            <person name="Geiger H."/>
            <person name="Geisler M."/>
            <person name="Karotki L."/>
            <person name="Kirn A."/>
            <person name="Konantz J."/>
            <person name="Konantz M."/>
            <person name="Oberlander M."/>
            <person name="Rudolph-Geiger S."/>
            <person name="Teucke M."/>
            <person name="Lanz C."/>
            <person name="Raddatz G."/>
            <person name="Osoegawa K."/>
            <person name="Zhu B."/>
            <person name="Rapp A."/>
            <person name="Widaa S."/>
            <person name="Langford C."/>
            <person name="Yang F."/>
            <person name="Schuster S.C."/>
            <person name="Carter N.P."/>
            <person name="Harrow J."/>
            <person name="Ning Z."/>
            <person name="Herrero J."/>
            <person name="Searle S.M."/>
            <person name="Enright A."/>
            <person name="Geisler R."/>
            <person name="Plasterk R.H."/>
            <person name="Lee C."/>
            <person name="Westerfield M."/>
            <person name="de Jong P.J."/>
            <person name="Zon L.I."/>
            <person name="Postlethwait J.H."/>
            <person name="Nusslein-Volhard C."/>
            <person name="Hubbard T.J."/>
            <person name="Roest Crollius H."/>
            <person name="Rogers J."/>
            <person name="Stemple D.L."/>
        </authorList>
    </citation>
    <scope>NUCLEOTIDE SEQUENCE [LARGE SCALE GENOMIC DNA]</scope>
    <source>
        <strain>Tuebingen</strain>
    </source>
</reference>
<reference key="2">
    <citation type="submission" date="2008-04" db="EMBL/GenBank/DDBJ databases">
        <authorList>
            <consortium name="NIH - Zebrafish Gene Collection (ZGC) project"/>
        </authorList>
    </citation>
    <scope>NUCLEOTIDE SEQUENCE [LARGE SCALE MRNA]</scope>
</reference>
<reference key="3">
    <citation type="journal article" date="2013" name="Am. J. Hum. Genet.">
        <title>Mutations in KLHL40 are a frequent cause of severe autosomal-recessive nemaline myopathy.</title>
        <authorList>
            <person name="Ravenscroft G."/>
            <person name="Miyatake S."/>
            <person name="Lehtokari V.L."/>
            <person name="Todd E.J."/>
            <person name="Vornanen P."/>
            <person name="Yau K.S."/>
            <person name="Hayashi Y.K."/>
            <person name="Miyake N."/>
            <person name="Tsurusaki Y."/>
            <person name="Doi H."/>
            <person name="Saitsu H."/>
            <person name="Osaka H."/>
            <person name="Yamashita S."/>
            <person name="Ohya T."/>
            <person name="Sakamoto Y."/>
            <person name="Koshimizu E."/>
            <person name="Imamura S."/>
            <person name="Yamashita M."/>
            <person name="Ogata K."/>
            <person name="Shiina M."/>
            <person name="Bryson-Richardson R.J."/>
            <person name="Vaz R."/>
            <person name="Ceyhan O."/>
            <person name="Brownstein C.A."/>
            <person name="Swanson L.C."/>
            <person name="Monnot S."/>
            <person name="Romero N.B."/>
            <person name="Amthor H."/>
            <person name="Kresoje N."/>
            <person name="Sivadorai P."/>
            <person name="Kiraly-Borri C."/>
            <person name="Haliloglu G."/>
            <person name="Talim B."/>
            <person name="Orhan D."/>
            <person name="Kale G."/>
            <person name="Charles A.K."/>
            <person name="Fabian V.A."/>
            <person name="Davis M.R."/>
            <person name="Lammens M."/>
            <person name="Sewry C.A."/>
            <person name="Manzur A."/>
            <person name="Muntoni F."/>
            <person name="Clarke N.F."/>
            <person name="North K.N."/>
            <person name="Bertini E."/>
            <person name="Nevo Y."/>
            <person name="Willichowski E."/>
            <person name="Silberg I.E."/>
            <person name="Topaloglu H."/>
            <person name="Beggs A.H."/>
            <person name="Allcock R.J."/>
            <person name="Nishino I."/>
            <person name="Wallgren-Pettersson C."/>
            <person name="Matsumoto N."/>
            <person name="Laing N.G."/>
        </authorList>
    </citation>
    <scope>FUNCTION</scope>
    <scope>TISSUE SPECIFICITY</scope>
    <scope>DEVELOPMENTAL STAGE</scope>
    <scope>DISRUPTION PHENOTYPE</scope>
</reference>
<feature type="chain" id="PRO_0000423863" description="Kelch-like protein 40a">
    <location>
        <begin position="1"/>
        <end position="612"/>
    </location>
</feature>
<feature type="domain" description="BTB" evidence="2">
    <location>
        <begin position="34"/>
        <end position="101"/>
    </location>
</feature>
<feature type="domain" description="BACK">
    <location>
        <begin position="136"/>
        <end position="238"/>
    </location>
</feature>
<feature type="repeat" description="Kelch 1">
    <location>
        <begin position="350"/>
        <end position="402"/>
    </location>
</feature>
<feature type="repeat" description="Kelch 2">
    <location>
        <begin position="403"/>
        <end position="452"/>
    </location>
</feature>
<feature type="repeat" description="Kelch 3">
    <location>
        <begin position="453"/>
        <end position="500"/>
    </location>
</feature>
<feature type="repeat" description="Kelch 4">
    <location>
        <begin position="502"/>
        <end position="547"/>
    </location>
</feature>
<feature type="repeat" description="Kelch 5">
    <location>
        <begin position="549"/>
        <end position="604"/>
    </location>
</feature>
<feature type="region of interest" description="Disordered" evidence="3">
    <location>
        <begin position="266"/>
        <end position="290"/>
    </location>
</feature>
<feature type="compositionally biased region" description="Basic residues" evidence="3">
    <location>
        <begin position="266"/>
        <end position="275"/>
    </location>
</feature>
<feature type="compositionally biased region" description="Acidic residues" evidence="3">
    <location>
        <begin position="281"/>
        <end position="290"/>
    </location>
</feature>
<feature type="sequence conflict" description="In Ref. 2; AAH78427." evidence="5" ref="2">
    <original>D</original>
    <variation>G</variation>
    <location>
        <position position="26"/>
    </location>
</feature>
<feature type="sequence conflict" description="In Ref. 2; AAI63267." evidence="5" ref="2">
    <original>V</original>
    <variation>I</variation>
    <location>
        <position position="84"/>
    </location>
</feature>
<feature type="sequence conflict" description="In Ref. 2; AAH78427." evidence="5" ref="2">
    <original>I</original>
    <variation>V</variation>
    <location>
        <position position="587"/>
    </location>
</feature>
<comment type="function">
    <text evidence="1 4">Substrate-specific adapter of a BCR (BTB-CUL3-RBX1) E3 ubiquitin ligase complex (By similarity). Required for skeletal muscle development (PubMed:23746549).</text>
</comment>
<comment type="subunit">
    <text evidence="1">Component of the BCR(KLHL40) E3 ubiquitin ligase complex.</text>
</comment>
<comment type="subcellular location">
    <subcellularLocation>
        <location evidence="1">Cytoplasm</location>
    </subcellularLocation>
    <subcellularLocation>
        <location evidence="1">Cytoplasm</location>
        <location evidence="1">Myofibril</location>
        <location evidence="1">Sarcomere</location>
        <location evidence="1">A band</location>
    </subcellularLocation>
    <subcellularLocation>
        <location evidence="1">Cytoplasm</location>
        <location evidence="1">Myofibril</location>
        <location evidence="1">Sarcomere</location>
        <location evidence="1">I band</location>
    </subcellularLocation>
</comment>
<comment type="tissue specificity">
    <text evidence="4">Expressed in skeletal muscle and heart. Detected, although at much lower levels, in brain, eye and fin.</text>
</comment>
<comment type="developmental stage">
    <text evidence="4">At 16 and 24 hpf, restricted to muscle precursor cells in somites. Also detected at 48 hpf.</text>
</comment>
<comment type="disruption phenotype">
    <text evidence="4">Morpholino knockdown of the protein results in a curved trunk and small head at 48 hpf. Morphants show disruption of skeletal muscle patterning with an irregular, wavy appearance of the striated myofibers and extensive gaps between the myofibers. Myofibers show disorganized and irregular patterns with small aggregates of alpha-actinin, suggesting nemaline bodies. Animals exhibit sporadic muscle tremor and coordinated swimming is not observed.</text>
</comment>
<comment type="similarity">
    <text evidence="5">Belongs to the KLHL40 family.</text>
</comment>
<organism>
    <name type="scientific">Danio rerio</name>
    <name type="common">Zebrafish</name>
    <name type="synonym">Brachydanio rerio</name>
    <dbReference type="NCBI Taxonomy" id="7955"/>
    <lineage>
        <taxon>Eukaryota</taxon>
        <taxon>Metazoa</taxon>
        <taxon>Chordata</taxon>
        <taxon>Craniata</taxon>
        <taxon>Vertebrata</taxon>
        <taxon>Euteleostomi</taxon>
        <taxon>Actinopterygii</taxon>
        <taxon>Neopterygii</taxon>
        <taxon>Teleostei</taxon>
        <taxon>Ostariophysi</taxon>
        <taxon>Cypriniformes</taxon>
        <taxon>Danionidae</taxon>
        <taxon>Danioninae</taxon>
        <taxon>Danio</taxon>
    </lineage>
</organism>